<reference key="1">
    <citation type="journal article" date="2000" name="DNA Res.">
        <title>Structural analysis of Arabidopsis thaliana chromosome 3. I. Sequence features of the regions of 4,504,864 bp covered by sixty P1 and TAC clones.</title>
        <authorList>
            <person name="Sato S."/>
            <person name="Nakamura Y."/>
            <person name="Kaneko T."/>
            <person name="Katoh T."/>
            <person name="Asamizu E."/>
            <person name="Tabata S."/>
        </authorList>
    </citation>
    <scope>NUCLEOTIDE SEQUENCE [LARGE SCALE GENOMIC DNA]</scope>
    <source>
        <strain>cv. Columbia</strain>
    </source>
</reference>
<reference key="2">
    <citation type="journal article" date="2017" name="Plant J.">
        <title>Araport11: a complete reannotation of the Arabidopsis thaliana reference genome.</title>
        <authorList>
            <person name="Cheng C.Y."/>
            <person name="Krishnakumar V."/>
            <person name="Chan A.P."/>
            <person name="Thibaud-Nissen F."/>
            <person name="Schobel S."/>
            <person name="Town C.D."/>
        </authorList>
    </citation>
    <scope>GENOME REANNOTATION</scope>
    <source>
        <strain>cv. Columbia</strain>
    </source>
</reference>
<reference key="3">
    <citation type="journal article" date="2003" name="Science">
        <title>Empirical analysis of transcriptional activity in the Arabidopsis genome.</title>
        <authorList>
            <person name="Yamada K."/>
            <person name="Lim J."/>
            <person name="Dale J.M."/>
            <person name="Chen H."/>
            <person name="Shinn P."/>
            <person name="Palm C.J."/>
            <person name="Southwick A.M."/>
            <person name="Wu H.C."/>
            <person name="Kim C.J."/>
            <person name="Nguyen M."/>
            <person name="Pham P.K."/>
            <person name="Cheuk R.F."/>
            <person name="Karlin-Newmann G."/>
            <person name="Liu S.X."/>
            <person name="Lam B."/>
            <person name="Sakano H."/>
            <person name="Wu T."/>
            <person name="Yu G."/>
            <person name="Miranda M."/>
            <person name="Quach H.L."/>
            <person name="Tripp M."/>
            <person name="Chang C.H."/>
            <person name="Lee J.M."/>
            <person name="Toriumi M.J."/>
            <person name="Chan M.M."/>
            <person name="Tang C.C."/>
            <person name="Onodera C.S."/>
            <person name="Deng J.M."/>
            <person name="Akiyama K."/>
            <person name="Ansari Y."/>
            <person name="Arakawa T."/>
            <person name="Banh J."/>
            <person name="Banno F."/>
            <person name="Bowser L."/>
            <person name="Brooks S.Y."/>
            <person name="Carninci P."/>
            <person name="Chao Q."/>
            <person name="Choy N."/>
            <person name="Enju A."/>
            <person name="Goldsmith A.D."/>
            <person name="Gurjal M."/>
            <person name="Hansen N.F."/>
            <person name="Hayashizaki Y."/>
            <person name="Johnson-Hopson C."/>
            <person name="Hsuan V.W."/>
            <person name="Iida K."/>
            <person name="Karnes M."/>
            <person name="Khan S."/>
            <person name="Koesema E."/>
            <person name="Ishida J."/>
            <person name="Jiang P.X."/>
            <person name="Jones T."/>
            <person name="Kawai J."/>
            <person name="Kamiya A."/>
            <person name="Meyers C."/>
            <person name="Nakajima M."/>
            <person name="Narusaka M."/>
            <person name="Seki M."/>
            <person name="Sakurai T."/>
            <person name="Satou M."/>
            <person name="Tamse R."/>
            <person name="Vaysberg M."/>
            <person name="Wallender E.K."/>
            <person name="Wong C."/>
            <person name="Yamamura Y."/>
            <person name="Yuan S."/>
            <person name="Shinozaki K."/>
            <person name="Davis R.W."/>
            <person name="Theologis A."/>
            <person name="Ecker J.R."/>
        </authorList>
    </citation>
    <scope>NUCLEOTIDE SEQUENCE [LARGE SCALE MRNA]</scope>
    <source>
        <strain>cv. Columbia</strain>
    </source>
</reference>
<reference key="4">
    <citation type="journal article" date="2006" name="J. Biol. Chem.">
        <title>MUBS: a family of ubiquitin-fold proteins that are plasma membrane-anchored by prenylation.</title>
        <authorList>
            <person name="Downes B.P."/>
            <person name="Saracco S.A."/>
            <person name="Lee S.S."/>
            <person name="Crowell D.N."/>
            <person name="Vierstra R.D."/>
        </authorList>
    </citation>
    <scope>IDENTIFICATION</scope>
    <scope>NOMENCLATURE</scope>
    <scope>ISOPRENYLATION AT CYS-117</scope>
    <scope>METHYLATION AT CYS-117</scope>
    <scope>MUTAGENESIS OF CYS-117</scope>
    <scope>TISSUE SPECIFICITY</scope>
    <scope>INDUCTION</scope>
    <scope>SUBCELLULAR LOCATION</scope>
</reference>
<gene>
    <name type="primary">MUB4</name>
    <name type="ordered locus">At3g26980</name>
    <name type="ORF">MOJ10.7</name>
</gene>
<sequence>MPEEDLVELKFRLYDGSDVGPFQYSPTATVSMLKERIVSEWPKDKKIVPKSASDIKLINAGKILENGKTVAQCKAPFDDLPKSVITMHVVVQLSPTKARPEKKIEKEEAPQRSFCSCTIM</sequence>
<organism>
    <name type="scientific">Arabidopsis thaliana</name>
    <name type="common">Mouse-ear cress</name>
    <dbReference type="NCBI Taxonomy" id="3702"/>
    <lineage>
        <taxon>Eukaryota</taxon>
        <taxon>Viridiplantae</taxon>
        <taxon>Streptophyta</taxon>
        <taxon>Embryophyta</taxon>
        <taxon>Tracheophyta</taxon>
        <taxon>Spermatophyta</taxon>
        <taxon>Magnoliopsida</taxon>
        <taxon>eudicotyledons</taxon>
        <taxon>Gunneridae</taxon>
        <taxon>Pentapetalae</taxon>
        <taxon>rosids</taxon>
        <taxon>malvids</taxon>
        <taxon>Brassicales</taxon>
        <taxon>Brassicaceae</taxon>
        <taxon>Camelineae</taxon>
        <taxon>Arabidopsis</taxon>
    </lineage>
</organism>
<feature type="chain" id="PRO_0000248167" description="Membrane-anchored ubiquitin-fold protein 4">
    <location>
        <begin position="1"/>
        <end position="117"/>
    </location>
</feature>
<feature type="propeptide" id="PRO_0000248168" description="Removed in mature form">
    <location>
        <begin position="118"/>
        <end position="120"/>
    </location>
</feature>
<feature type="domain" description="Ubiquitin-like" evidence="2">
    <location>
        <begin position="7"/>
        <end position="73"/>
    </location>
</feature>
<feature type="modified residue" description="Cysteine methyl ester" evidence="3">
    <location>
        <position position="117"/>
    </location>
</feature>
<feature type="lipid moiety-binding region" description="S-palmitoyl cysteine" evidence="1">
    <location>
        <position position="115"/>
    </location>
</feature>
<feature type="lipid moiety-binding region" description="S-farnesyl cysteine" evidence="3">
    <location>
        <position position="117"/>
    </location>
</feature>
<feature type="mutagenesis site" description="Loss of prenylation and membrane localization." evidence="3">
    <original>C</original>
    <variation>S</variation>
    <location>
        <position position="117"/>
    </location>
</feature>
<protein>
    <recommendedName>
        <fullName>Membrane-anchored ubiquitin-fold protein 4</fullName>
        <shortName>AtMUB4</shortName>
        <shortName>Membrane-anchored ub-fold protein 4</shortName>
    </recommendedName>
</protein>
<keyword id="KW-1003">Cell membrane</keyword>
<keyword id="KW-0449">Lipoprotein</keyword>
<keyword id="KW-0472">Membrane</keyword>
<keyword id="KW-0488">Methylation</keyword>
<keyword id="KW-0564">Palmitate</keyword>
<keyword id="KW-0636">Prenylation</keyword>
<keyword id="KW-1185">Reference proteome</keyword>
<evidence type="ECO:0000255" key="1"/>
<evidence type="ECO:0000255" key="2">
    <source>
        <dbReference type="PROSITE-ProRule" id="PRU00214"/>
    </source>
</evidence>
<evidence type="ECO:0000269" key="3">
    <source>
    </source>
</evidence>
<comment type="function">
    <text>May serve as docking site to facilitate the association of other proteins to the plasma membrane.</text>
</comment>
<comment type="subcellular location">
    <subcellularLocation>
        <location evidence="3">Cell membrane</location>
        <topology evidence="3">Lipid-anchor</topology>
    </subcellularLocation>
</comment>
<comment type="tissue specificity">
    <text evidence="3">Ubiquitous.</text>
</comment>
<comment type="induction">
    <text evidence="3">Induced by pathogens, cycloheximide and ozone treatment.</text>
</comment>
<comment type="miscellaneous">
    <text>Heat stable and remains soluble at temperatures exceeding 90 degrees Celsius.</text>
</comment>
<proteinExistence type="evidence at protein level"/>
<accession>Q9LSD8</accession>
<name>MUB4_ARATH</name>
<dbReference type="EMBL" id="AB026649">
    <property type="protein sequence ID" value="BAB01079.1"/>
    <property type="molecule type" value="Genomic_DNA"/>
</dbReference>
<dbReference type="EMBL" id="CP002686">
    <property type="protein sequence ID" value="AEE77251.1"/>
    <property type="molecule type" value="Genomic_DNA"/>
</dbReference>
<dbReference type="EMBL" id="AY045950">
    <property type="protein sequence ID" value="AAK76624.1"/>
    <property type="molecule type" value="mRNA"/>
</dbReference>
<dbReference type="EMBL" id="AY079339">
    <property type="protein sequence ID" value="AAL85070.1"/>
    <property type="molecule type" value="mRNA"/>
</dbReference>
<dbReference type="RefSeq" id="NP_189334.2">
    <property type="nucleotide sequence ID" value="NM_113612.4"/>
</dbReference>
<dbReference type="SMR" id="Q9LSD8"/>
<dbReference type="BioGRID" id="7645">
    <property type="interactions" value="7"/>
</dbReference>
<dbReference type="FunCoup" id="Q9LSD8">
    <property type="interactions" value="18"/>
</dbReference>
<dbReference type="STRING" id="3702.Q9LSD8"/>
<dbReference type="PaxDb" id="3702-AT3G26980.1"/>
<dbReference type="ProteomicsDB" id="238490"/>
<dbReference type="DNASU" id="822315"/>
<dbReference type="EnsemblPlants" id="AT3G26980.1">
    <property type="protein sequence ID" value="AT3G26980.1"/>
    <property type="gene ID" value="AT3G26980"/>
</dbReference>
<dbReference type="GeneID" id="822315"/>
<dbReference type="Gramene" id="AT3G26980.1">
    <property type="protein sequence ID" value="AT3G26980.1"/>
    <property type="gene ID" value="AT3G26980"/>
</dbReference>
<dbReference type="KEGG" id="ath:AT3G26980"/>
<dbReference type="Araport" id="AT3G26980"/>
<dbReference type="TAIR" id="AT3G26980">
    <property type="gene designation" value="MUB4"/>
</dbReference>
<dbReference type="eggNOG" id="ENOG502RZE2">
    <property type="taxonomic scope" value="Eukaryota"/>
</dbReference>
<dbReference type="HOGENOM" id="CLU_136465_1_0_1"/>
<dbReference type="InParanoid" id="Q9LSD8"/>
<dbReference type="OMA" id="HICACSI"/>
<dbReference type="OrthoDB" id="1043111at2759"/>
<dbReference type="PhylomeDB" id="Q9LSD8"/>
<dbReference type="PRO" id="PR:Q9LSD8"/>
<dbReference type="Proteomes" id="UP000006548">
    <property type="component" value="Chromosome 3"/>
</dbReference>
<dbReference type="ExpressionAtlas" id="Q9LSD8">
    <property type="expression patterns" value="baseline and differential"/>
</dbReference>
<dbReference type="GO" id="GO:0005886">
    <property type="term" value="C:plasma membrane"/>
    <property type="evidence" value="ECO:0007669"/>
    <property type="project" value="UniProtKB-SubCell"/>
</dbReference>
<dbReference type="CDD" id="cd01814">
    <property type="entry name" value="Ubl_MUBs_plant"/>
    <property type="match status" value="1"/>
</dbReference>
<dbReference type="Gene3D" id="3.10.20.90">
    <property type="entry name" value="Phosphatidylinositol 3-kinase Catalytic Subunit, Chain A, domain 1"/>
    <property type="match status" value="1"/>
</dbReference>
<dbReference type="InterPro" id="IPR017000">
    <property type="entry name" value="MUB"/>
</dbReference>
<dbReference type="InterPro" id="IPR000626">
    <property type="entry name" value="Ubiquitin-like_dom"/>
</dbReference>
<dbReference type="InterPro" id="IPR029071">
    <property type="entry name" value="Ubiquitin-like_domsf"/>
</dbReference>
<dbReference type="InterPro" id="IPR040015">
    <property type="entry name" value="UBL3-like"/>
</dbReference>
<dbReference type="InterPro" id="IPR039540">
    <property type="entry name" value="UBL3-like_ubiquitin_dom"/>
</dbReference>
<dbReference type="PANTHER" id="PTHR13169:SF1">
    <property type="entry name" value="MEMBRANE-ANCHORED UBIQUITIN-FOLD PROTEIN 4"/>
    <property type="match status" value="1"/>
</dbReference>
<dbReference type="PANTHER" id="PTHR13169">
    <property type="entry name" value="UBIQUITIN-LIKE PROTEIN 3 HCG-1 PROTEIN"/>
    <property type="match status" value="1"/>
</dbReference>
<dbReference type="Pfam" id="PF13881">
    <property type="entry name" value="Rad60-SLD_2"/>
    <property type="match status" value="1"/>
</dbReference>
<dbReference type="PIRSF" id="PIRSF032572">
    <property type="entry name" value="MUB"/>
    <property type="match status" value="1"/>
</dbReference>
<dbReference type="SUPFAM" id="SSF54236">
    <property type="entry name" value="Ubiquitin-like"/>
    <property type="match status" value="1"/>
</dbReference>
<dbReference type="PROSITE" id="PS50053">
    <property type="entry name" value="UBIQUITIN_2"/>
    <property type="match status" value="1"/>
</dbReference>